<protein>
    <recommendedName>
        <fullName evidence="1">2-hydroxy-3-keto-5-methylthiopentenyl-1-phosphate phosphatase</fullName>
        <shortName evidence="1">HK-MTPenyl-1-P phosphatase</shortName>
        <ecNumber evidence="1">3.1.3.87</ecNumber>
    </recommendedName>
</protein>
<comment type="function">
    <text evidence="1">Dephosphorylates 2-hydroxy-3-keto-5-methylthiopentenyl-1-phosphate (HK-MTPenyl-1-P) yielding 1,2-dihydroxy-3-keto-5-methylthiopentene (DHK-MTPene).</text>
</comment>
<comment type="catalytic activity">
    <reaction evidence="1">
        <text>2-hydroxy-5-methylsulfanyl-3-oxopent-1-enyl phosphate + H2O = 1,2-dihydroxy-5-(methylsulfanyl)pent-1-en-3-one + phosphate</text>
        <dbReference type="Rhea" id="RHEA:14481"/>
        <dbReference type="ChEBI" id="CHEBI:15377"/>
        <dbReference type="ChEBI" id="CHEBI:43474"/>
        <dbReference type="ChEBI" id="CHEBI:49252"/>
        <dbReference type="ChEBI" id="CHEBI:59505"/>
        <dbReference type="EC" id="3.1.3.87"/>
    </reaction>
</comment>
<comment type="pathway">
    <text evidence="1">Amino-acid biosynthesis; L-methionine biosynthesis via salvage pathway; L-methionine from S-methyl-5-thio-alpha-D-ribose 1-phosphate: step 4/6.</text>
</comment>
<comment type="similarity">
    <text evidence="1">Belongs to the HAD-like hydrolase superfamily. MtnX family.</text>
</comment>
<reference key="1">
    <citation type="journal article" date="2007" name="Proc. Natl. Acad. Sci. U.S.A.">
        <title>Genome and proteome of long-chain alkane degrading Geobacillus thermodenitrificans NG80-2 isolated from a deep-subsurface oil reservoir.</title>
        <authorList>
            <person name="Feng L."/>
            <person name="Wang W."/>
            <person name="Cheng J."/>
            <person name="Ren Y."/>
            <person name="Zhao G."/>
            <person name="Gao C."/>
            <person name="Tang Y."/>
            <person name="Liu X."/>
            <person name="Han W."/>
            <person name="Peng X."/>
            <person name="Liu R."/>
            <person name="Wang L."/>
        </authorList>
    </citation>
    <scope>NUCLEOTIDE SEQUENCE [LARGE SCALE GENOMIC DNA]</scope>
    <source>
        <strain>NG80-2</strain>
    </source>
</reference>
<keyword id="KW-0028">Amino-acid biosynthesis</keyword>
<keyword id="KW-0378">Hydrolase</keyword>
<keyword id="KW-0486">Methionine biosynthesis</keyword>
<dbReference type="EC" id="3.1.3.87" evidence="1"/>
<dbReference type="EMBL" id="CP000557">
    <property type="protein sequence ID" value="ABO66220.1"/>
    <property type="molecule type" value="Genomic_DNA"/>
</dbReference>
<dbReference type="RefSeq" id="WP_011887037.1">
    <property type="nucleotide sequence ID" value="NC_009328.1"/>
</dbReference>
<dbReference type="SMR" id="A4ILL6"/>
<dbReference type="GeneID" id="87621562"/>
<dbReference type="KEGG" id="gtn:GTNG_0842"/>
<dbReference type="eggNOG" id="COG4359">
    <property type="taxonomic scope" value="Bacteria"/>
</dbReference>
<dbReference type="HOGENOM" id="CLU_058495_2_1_9"/>
<dbReference type="UniPathway" id="UPA00904">
    <property type="reaction ID" value="UER00877"/>
</dbReference>
<dbReference type="Proteomes" id="UP000001578">
    <property type="component" value="Chromosome"/>
</dbReference>
<dbReference type="GO" id="GO:0043716">
    <property type="term" value="F:2-hydroxy-3-keto-5-methylthiopentenyl-1-phosphate phosphatase activity"/>
    <property type="evidence" value="ECO:0007669"/>
    <property type="project" value="UniProtKB-UniRule"/>
</dbReference>
<dbReference type="GO" id="GO:0019509">
    <property type="term" value="P:L-methionine salvage from methylthioadenosine"/>
    <property type="evidence" value="ECO:0007669"/>
    <property type="project" value="UniProtKB-UniRule"/>
</dbReference>
<dbReference type="CDD" id="cd07524">
    <property type="entry name" value="HAD_Pase"/>
    <property type="match status" value="1"/>
</dbReference>
<dbReference type="Gene3D" id="3.90.1470.20">
    <property type="match status" value="1"/>
</dbReference>
<dbReference type="Gene3D" id="3.40.50.1000">
    <property type="entry name" value="HAD superfamily/HAD-like"/>
    <property type="match status" value="1"/>
</dbReference>
<dbReference type="HAMAP" id="MF_01680">
    <property type="entry name" value="Salvage_MtnX"/>
    <property type="match status" value="1"/>
</dbReference>
<dbReference type="InterPro" id="IPR050849">
    <property type="entry name" value="HAD-like_hydrolase_phosphatase"/>
</dbReference>
<dbReference type="InterPro" id="IPR036412">
    <property type="entry name" value="HAD-like_sf"/>
</dbReference>
<dbReference type="InterPro" id="IPR017718">
    <property type="entry name" value="HAD-SF_hydro_IB_MtnX"/>
</dbReference>
<dbReference type="InterPro" id="IPR006384">
    <property type="entry name" value="HAD_hydro_PyrdxlP_Pase-like"/>
</dbReference>
<dbReference type="InterPro" id="IPR023214">
    <property type="entry name" value="HAD_sf"/>
</dbReference>
<dbReference type="NCBIfam" id="TIGR01489">
    <property type="entry name" value="DKMTPPase-SF"/>
    <property type="match status" value="1"/>
</dbReference>
<dbReference type="NCBIfam" id="TIGR01488">
    <property type="entry name" value="HAD-SF-IB"/>
    <property type="match status" value="1"/>
</dbReference>
<dbReference type="NCBIfam" id="NF007103">
    <property type="entry name" value="PRK09552.1"/>
    <property type="match status" value="1"/>
</dbReference>
<dbReference type="NCBIfam" id="TIGR03333">
    <property type="entry name" value="salvage_mtnX"/>
    <property type="match status" value="1"/>
</dbReference>
<dbReference type="PANTHER" id="PTHR28181:SF2">
    <property type="entry name" value="PHOSPHORIC MONOESTER HYDROLASE"/>
    <property type="match status" value="1"/>
</dbReference>
<dbReference type="PANTHER" id="PTHR28181">
    <property type="entry name" value="UPF0655 PROTEIN YCR015C"/>
    <property type="match status" value="1"/>
</dbReference>
<dbReference type="Pfam" id="PF12710">
    <property type="entry name" value="HAD"/>
    <property type="match status" value="1"/>
</dbReference>
<dbReference type="SUPFAM" id="SSF56784">
    <property type="entry name" value="HAD-like"/>
    <property type="match status" value="1"/>
</dbReference>
<feature type="chain" id="PRO_0000357486" description="2-hydroxy-3-keto-5-methylthiopentenyl-1-phosphate phosphatase">
    <location>
        <begin position="1"/>
        <end position="220"/>
    </location>
</feature>
<proteinExistence type="inferred from homology"/>
<name>MTNX_GEOTN</name>
<sequence length="220" mass="24789">MKKQLVLFCDFDGTITENDNIIAIMKQFAPPEWEALKDDILAERLSVQEGVGKMFSLLPSALKDEIVDFLLSTARLREGFREFVAFTKEKGIPLYIVSGGIDFFVYPMLDGLIDKERIFCNGSDFSSEMIRITWPHACDGKCQNGCGCCKPSLLRKLARPDGYHVVIGDSITDLAVAKQADYVLARDFLLKKCQELDLPHAPFTTFFDVVDHLQRLEVIA</sequence>
<evidence type="ECO:0000255" key="1">
    <source>
        <dbReference type="HAMAP-Rule" id="MF_01680"/>
    </source>
</evidence>
<gene>
    <name evidence="1" type="primary">mtnX</name>
    <name type="ordered locus">GTNG_0842</name>
</gene>
<accession>A4ILL6</accession>
<organism>
    <name type="scientific">Geobacillus thermodenitrificans (strain NG80-2)</name>
    <dbReference type="NCBI Taxonomy" id="420246"/>
    <lineage>
        <taxon>Bacteria</taxon>
        <taxon>Bacillati</taxon>
        <taxon>Bacillota</taxon>
        <taxon>Bacilli</taxon>
        <taxon>Bacillales</taxon>
        <taxon>Anoxybacillaceae</taxon>
        <taxon>Geobacillus</taxon>
    </lineage>
</organism>